<protein>
    <recommendedName>
        <fullName evidence="1">Dol-P-Man:Man(5)GlcNAc(2)-PP-Dol alpha-1,3-mannosyltransferase</fullName>
        <ecNumber evidence="1">2.4.1.258</ecNumber>
    </recommendedName>
    <alternativeName>
        <fullName>Asparagine-linked glycosylation protein 6</fullName>
    </alternativeName>
    <alternativeName>
        <fullName>Dol-P-Man-dependent alpha(1-3)-mannosyltransferase</fullName>
    </alternativeName>
    <alternativeName>
        <fullName>Dolichyl-P-Man:Man(5)GlcNAc(2)-PP-dolichyl mannosyltransferase</fullName>
    </alternativeName>
</protein>
<name>ALG3_ASPOR</name>
<proteinExistence type="inferred from homology"/>
<reference key="1">
    <citation type="journal article" date="2005" name="Nature">
        <title>Genome sequencing and analysis of Aspergillus oryzae.</title>
        <authorList>
            <person name="Machida M."/>
            <person name="Asai K."/>
            <person name="Sano M."/>
            <person name="Tanaka T."/>
            <person name="Kumagai T."/>
            <person name="Terai G."/>
            <person name="Kusumoto K."/>
            <person name="Arima T."/>
            <person name="Akita O."/>
            <person name="Kashiwagi Y."/>
            <person name="Abe K."/>
            <person name="Gomi K."/>
            <person name="Horiuchi H."/>
            <person name="Kitamoto K."/>
            <person name="Kobayashi T."/>
            <person name="Takeuchi M."/>
            <person name="Denning D.W."/>
            <person name="Galagan J.E."/>
            <person name="Nierman W.C."/>
            <person name="Yu J."/>
            <person name="Archer D.B."/>
            <person name="Bennett J.W."/>
            <person name="Bhatnagar D."/>
            <person name="Cleveland T.E."/>
            <person name="Fedorova N.D."/>
            <person name="Gotoh O."/>
            <person name="Horikawa H."/>
            <person name="Hosoyama A."/>
            <person name="Ichinomiya M."/>
            <person name="Igarashi R."/>
            <person name="Iwashita K."/>
            <person name="Juvvadi P.R."/>
            <person name="Kato M."/>
            <person name="Kato Y."/>
            <person name="Kin T."/>
            <person name="Kokubun A."/>
            <person name="Maeda H."/>
            <person name="Maeyama N."/>
            <person name="Maruyama J."/>
            <person name="Nagasaki H."/>
            <person name="Nakajima T."/>
            <person name="Oda K."/>
            <person name="Okada K."/>
            <person name="Paulsen I."/>
            <person name="Sakamoto K."/>
            <person name="Sawano T."/>
            <person name="Takahashi M."/>
            <person name="Takase K."/>
            <person name="Terabayashi Y."/>
            <person name="Wortman J.R."/>
            <person name="Yamada O."/>
            <person name="Yamagata Y."/>
            <person name="Anazawa H."/>
            <person name="Hata Y."/>
            <person name="Koide Y."/>
            <person name="Komori T."/>
            <person name="Koyama Y."/>
            <person name="Minetoki T."/>
            <person name="Suharnan S."/>
            <person name="Tanaka A."/>
            <person name="Isono K."/>
            <person name="Kuhara S."/>
            <person name="Ogasawara N."/>
            <person name="Kikuchi H."/>
        </authorList>
    </citation>
    <scope>NUCLEOTIDE SEQUENCE [LARGE SCALE GENOMIC DNA]</scope>
    <source>
        <strain>ATCC 42149 / RIB 40</strain>
    </source>
</reference>
<evidence type="ECO:0000250" key="1">
    <source>
        <dbReference type="UniProtKB" id="P38179"/>
    </source>
</evidence>
<evidence type="ECO:0000255" key="2"/>
<evidence type="ECO:0000305" key="3"/>
<sequence length="413" mass="46649">MELKHFIHELCLNPRHTKWIAPLLVIGDAFLCALIIWKIPYTEIDWTTYMQQIALYISGERDYTLIKGSTGPLVYPAAHVYSYMALYHLTDEGRDILFGQILFAVLYLVTLAVVMVCYRQSGAPPYLFPLLVLSKRLHSVFVLRLFNDGLAVCAMWIAILLFQNKKWTAGVTAWTVGVGIKMTLLLLAPAIAVVTVLSLSLVPSIRLGILALLIQVLLAIPFLQGNPIGYVARAFELTRQFMFKWTVNWRFVGEDLFLSKQFSLALLGLHIFLLGLFVTTGWLRPSGSNVPDFLRSLLQGRQRTVVLSKSFIMTVMLTSLAIGLLCARSLHYQFFAYLSWATPCLLWRARLHPILIYAIWALQEWAWNVYPSTNASSSVVVFSLAVQVFGVLLNSRNALSDAPPRRKGKEHIQ</sequence>
<accession>Q2U6A4</accession>
<feature type="chain" id="PRO_0000350923" description="Dol-P-Man:Man(5)GlcNAc(2)-PP-Dol alpha-1,3-mannosyltransferase">
    <location>
        <begin position="1"/>
        <end position="413"/>
    </location>
</feature>
<feature type="topological domain" description="Lumenal" evidence="2">
    <location>
        <begin position="1"/>
        <end position="18"/>
    </location>
</feature>
<feature type="transmembrane region" description="Helical" evidence="2">
    <location>
        <begin position="19"/>
        <end position="39"/>
    </location>
</feature>
<feature type="topological domain" description="Cytoplasmic" evidence="2">
    <location>
        <begin position="40"/>
        <end position="95"/>
    </location>
</feature>
<feature type="transmembrane region" description="Helical" evidence="2">
    <location>
        <begin position="96"/>
        <end position="116"/>
    </location>
</feature>
<feature type="topological domain" description="Lumenal" evidence="2">
    <location>
        <begin position="117"/>
        <end position="139"/>
    </location>
</feature>
<feature type="transmembrane region" description="Helical" evidence="2">
    <location>
        <begin position="140"/>
        <end position="160"/>
    </location>
</feature>
<feature type="topological domain" description="Cytoplasmic" evidence="2">
    <location>
        <begin position="161"/>
        <end position="181"/>
    </location>
</feature>
<feature type="transmembrane region" description="Helical" evidence="2">
    <location>
        <begin position="182"/>
        <end position="202"/>
    </location>
</feature>
<feature type="topological domain" description="Lumenal" evidence="2">
    <location>
        <begin position="203"/>
        <end position="207"/>
    </location>
</feature>
<feature type="transmembrane region" description="Helical" evidence="2">
    <location>
        <begin position="208"/>
        <end position="228"/>
    </location>
</feature>
<feature type="topological domain" description="Cytoplasmic" evidence="2">
    <location>
        <begin position="229"/>
        <end position="261"/>
    </location>
</feature>
<feature type="transmembrane region" description="Helical" evidence="2">
    <location>
        <begin position="262"/>
        <end position="282"/>
    </location>
</feature>
<feature type="topological domain" description="Lumenal" evidence="2">
    <location>
        <begin position="283"/>
        <end position="304"/>
    </location>
</feature>
<feature type="transmembrane region" description="Helical" evidence="2">
    <location>
        <begin position="305"/>
        <end position="325"/>
    </location>
</feature>
<feature type="topological domain" description="Cytoplasmic" evidence="2">
    <location>
        <begin position="326"/>
        <end position="372"/>
    </location>
</feature>
<feature type="transmembrane region" description="Helical" evidence="2">
    <location>
        <begin position="373"/>
        <end position="393"/>
    </location>
</feature>
<feature type="topological domain" description="Lumenal" evidence="2">
    <location>
        <begin position="394"/>
        <end position="413"/>
    </location>
</feature>
<comment type="function">
    <text evidence="1">Dol-P-Man:Man(5)GlcNAc(2)-PP-Dol alpha-1,3-mannosyltransferase that operates in the biosynthetic pathway of dolichol-linked oligosaccharides, the glycan precursors employed in protein asparagine (N)-glycosylation. The assembly of dolichol-linked oligosaccharides begins on the cytosolic side of the endoplasmic reticulum membrane and finishes in its lumen. The sequential addition of sugars to dolichol pyrophosphate produces dolichol-linked oligosaccharides containing fourteen sugars, including two GlcNAcs, nine mannoses and three glucoses. Once assembled, the oligosaccharide is transferred from the lipid to nascent proteins by oligosaccharyltransferases. In the lumen of the endoplasmic reticulum, adds the first dolichyl beta-D-mannosyl phosphate derived mannose in an alpha-1,3 linkage to Man(5)GlcNAc(2)-PP-dolichol to produce Man(6)GlcNAc(2)-PP-dolichol.</text>
</comment>
<comment type="catalytic activity">
    <reaction evidence="1">
        <text>an alpha-D-Man-(1-&gt;2)-alpha-D-Man-(1-&gt;2)-alpha-D-Man-(1-&gt;3)-[alpha-D-Man-(1-&gt;6)]-beta-D-Man-(1-&gt;4)-beta-D-GlcNAc-(1-&gt;4)-alpha-D-GlcNAc-diphospho-di-trans,poly-cis-dolichol + a di-trans,poly-cis-dolichyl beta-D-mannosyl phosphate = an alpha-D-Man-(1-&gt;2)-alpha-D-Man-(1-&gt;2)-alpha-D-Man-(1-&gt;3)-[alpha-D-Man-(1-&gt;3)-alpha-D-Man-(1-&gt;6)]-beta-D-Man-(1-&gt;4)-beta-D-GlcNAc-(1-&gt;4)-alpha-D-GlcNAc-diphospho-di-trans,poly-cis-dolichol + a di-trans,poly-cis-dolichyl phosphate + H(+)</text>
        <dbReference type="Rhea" id="RHEA:29527"/>
        <dbReference type="Rhea" id="RHEA-COMP:19498"/>
        <dbReference type="Rhea" id="RHEA-COMP:19501"/>
        <dbReference type="Rhea" id="RHEA-COMP:19516"/>
        <dbReference type="Rhea" id="RHEA-COMP:19517"/>
        <dbReference type="ChEBI" id="CHEBI:15378"/>
        <dbReference type="ChEBI" id="CHEBI:57683"/>
        <dbReference type="ChEBI" id="CHEBI:58211"/>
        <dbReference type="ChEBI" id="CHEBI:132515"/>
        <dbReference type="ChEBI" id="CHEBI:132516"/>
        <dbReference type="EC" id="2.4.1.258"/>
    </reaction>
    <physiologicalReaction direction="left-to-right" evidence="1">
        <dbReference type="Rhea" id="RHEA:29528"/>
    </physiologicalReaction>
</comment>
<comment type="pathway">
    <text evidence="1">Protein modification; protein glycosylation.</text>
</comment>
<comment type="subcellular location">
    <subcellularLocation>
        <location evidence="1">Endoplasmic reticulum membrane</location>
        <topology evidence="2">Multi-pass membrane protein</topology>
    </subcellularLocation>
</comment>
<comment type="similarity">
    <text evidence="3">Belongs to the glycosyltransferase ALG3 family.</text>
</comment>
<keyword id="KW-0256">Endoplasmic reticulum</keyword>
<keyword id="KW-0328">Glycosyltransferase</keyword>
<keyword id="KW-0472">Membrane</keyword>
<keyword id="KW-1185">Reference proteome</keyword>
<keyword id="KW-0808">Transferase</keyword>
<keyword id="KW-0812">Transmembrane</keyword>
<keyword id="KW-1133">Transmembrane helix</keyword>
<organism>
    <name type="scientific">Aspergillus oryzae (strain ATCC 42149 / RIB 40)</name>
    <name type="common">Yellow koji mold</name>
    <dbReference type="NCBI Taxonomy" id="510516"/>
    <lineage>
        <taxon>Eukaryota</taxon>
        <taxon>Fungi</taxon>
        <taxon>Dikarya</taxon>
        <taxon>Ascomycota</taxon>
        <taxon>Pezizomycotina</taxon>
        <taxon>Eurotiomycetes</taxon>
        <taxon>Eurotiomycetidae</taxon>
        <taxon>Eurotiales</taxon>
        <taxon>Aspergillaceae</taxon>
        <taxon>Aspergillus</taxon>
        <taxon>Aspergillus subgen. Circumdati</taxon>
    </lineage>
</organism>
<dbReference type="EC" id="2.4.1.258" evidence="1"/>
<dbReference type="EMBL" id="AP007166">
    <property type="protein sequence ID" value="BAE62911.1"/>
    <property type="molecule type" value="Genomic_DNA"/>
</dbReference>
<dbReference type="RefSeq" id="XP_001824044.1">
    <property type="nucleotide sequence ID" value="XM_001823992.2"/>
</dbReference>
<dbReference type="SMR" id="Q2U6A4"/>
<dbReference type="STRING" id="510516.Q2U6A4"/>
<dbReference type="CAZy" id="GT58">
    <property type="family name" value="Glycosyltransferase Family 58"/>
</dbReference>
<dbReference type="EnsemblFungi" id="BAE62911">
    <property type="protein sequence ID" value="BAE62911"/>
    <property type="gene ID" value="AO090120000319"/>
</dbReference>
<dbReference type="GeneID" id="5996303"/>
<dbReference type="KEGG" id="aor:AO090120000319"/>
<dbReference type="VEuPathDB" id="FungiDB:AO090120000319"/>
<dbReference type="HOGENOM" id="CLU_035382_3_0_1"/>
<dbReference type="OMA" id="DWETYMI"/>
<dbReference type="OrthoDB" id="78697at5052"/>
<dbReference type="UniPathway" id="UPA00378"/>
<dbReference type="Proteomes" id="UP000006564">
    <property type="component" value="Chromosome 5"/>
</dbReference>
<dbReference type="GO" id="GO:0005789">
    <property type="term" value="C:endoplasmic reticulum membrane"/>
    <property type="evidence" value="ECO:0007669"/>
    <property type="project" value="UniProtKB-SubCell"/>
</dbReference>
<dbReference type="GO" id="GO:0052925">
    <property type="term" value="F:dol-P-Man:Man(5)GlcNAc(2)-PP-Dol alpha-1,3-mannosyltransferase activity"/>
    <property type="evidence" value="ECO:0007669"/>
    <property type="project" value="UniProtKB-EC"/>
</dbReference>
<dbReference type="GO" id="GO:0006488">
    <property type="term" value="P:dolichol-linked oligosaccharide biosynthetic process"/>
    <property type="evidence" value="ECO:0007669"/>
    <property type="project" value="EnsemblFungi"/>
</dbReference>
<dbReference type="InterPro" id="IPR007873">
    <property type="entry name" value="Glycosyltransferase_ALG3"/>
</dbReference>
<dbReference type="PANTHER" id="PTHR12646:SF0">
    <property type="entry name" value="DOL-P-MAN:MAN(5)GLCNAC(2)-PP-DOL ALPHA-1,3-MANNOSYLTRANSFERASE"/>
    <property type="match status" value="1"/>
</dbReference>
<dbReference type="PANTHER" id="PTHR12646">
    <property type="entry name" value="NOT56 - RELATED"/>
    <property type="match status" value="1"/>
</dbReference>
<dbReference type="Pfam" id="PF05208">
    <property type="entry name" value="ALG3"/>
    <property type="match status" value="1"/>
</dbReference>
<gene>
    <name type="primary">alg3</name>
    <name type="ORF">AO090120000319</name>
</gene>